<name>Y5916_DICDI</name>
<evidence type="ECO:0000256" key="1">
    <source>
        <dbReference type="SAM" id="MobiDB-lite"/>
    </source>
</evidence>
<organism>
    <name type="scientific">Dictyostelium discoideum</name>
    <name type="common">Social amoeba</name>
    <dbReference type="NCBI Taxonomy" id="44689"/>
    <lineage>
        <taxon>Eukaryota</taxon>
        <taxon>Amoebozoa</taxon>
        <taxon>Evosea</taxon>
        <taxon>Eumycetozoa</taxon>
        <taxon>Dictyostelia</taxon>
        <taxon>Dictyosteliales</taxon>
        <taxon>Dictyosteliaceae</taxon>
        <taxon>Dictyostelium</taxon>
    </lineage>
</organism>
<accession>Q54VZ9</accession>
<dbReference type="EMBL" id="AAFI02000035">
    <property type="protein sequence ID" value="EAL67466.1"/>
    <property type="molecule type" value="Genomic_DNA"/>
</dbReference>
<dbReference type="RefSeq" id="XP_641451.1">
    <property type="nucleotide sequence ID" value="XM_636359.1"/>
</dbReference>
<dbReference type="PaxDb" id="44689-DDB0205916"/>
<dbReference type="EnsemblProtists" id="EAL67466">
    <property type="protein sequence ID" value="EAL67466"/>
    <property type="gene ID" value="DDB_G0279989"/>
</dbReference>
<dbReference type="GeneID" id="8622336"/>
<dbReference type="KEGG" id="ddi:DDB_G0279989"/>
<dbReference type="dictyBase" id="DDB_G0279989"/>
<dbReference type="VEuPathDB" id="AmoebaDB:DDB_G0279989"/>
<dbReference type="HOGENOM" id="CLU_1707547_0_0_1"/>
<dbReference type="InParanoid" id="Q54VZ9"/>
<dbReference type="PRO" id="PR:Q54VZ9"/>
<dbReference type="Proteomes" id="UP000002195">
    <property type="component" value="Chromosome 3"/>
</dbReference>
<reference key="1">
    <citation type="journal article" date="2005" name="Nature">
        <title>The genome of the social amoeba Dictyostelium discoideum.</title>
        <authorList>
            <person name="Eichinger L."/>
            <person name="Pachebat J.A."/>
            <person name="Gloeckner G."/>
            <person name="Rajandream M.A."/>
            <person name="Sucgang R."/>
            <person name="Berriman M."/>
            <person name="Song J."/>
            <person name="Olsen R."/>
            <person name="Szafranski K."/>
            <person name="Xu Q."/>
            <person name="Tunggal B."/>
            <person name="Kummerfeld S."/>
            <person name="Madera M."/>
            <person name="Konfortov B.A."/>
            <person name="Rivero F."/>
            <person name="Bankier A.T."/>
            <person name="Lehmann R."/>
            <person name="Hamlin N."/>
            <person name="Davies R."/>
            <person name="Gaudet P."/>
            <person name="Fey P."/>
            <person name="Pilcher K."/>
            <person name="Chen G."/>
            <person name="Saunders D."/>
            <person name="Sodergren E.J."/>
            <person name="Davis P."/>
            <person name="Kerhornou A."/>
            <person name="Nie X."/>
            <person name="Hall N."/>
            <person name="Anjard C."/>
            <person name="Hemphill L."/>
            <person name="Bason N."/>
            <person name="Farbrother P."/>
            <person name="Desany B."/>
            <person name="Just E."/>
            <person name="Morio T."/>
            <person name="Rost R."/>
            <person name="Churcher C.M."/>
            <person name="Cooper J."/>
            <person name="Haydock S."/>
            <person name="van Driessche N."/>
            <person name="Cronin A."/>
            <person name="Goodhead I."/>
            <person name="Muzny D.M."/>
            <person name="Mourier T."/>
            <person name="Pain A."/>
            <person name="Lu M."/>
            <person name="Harper D."/>
            <person name="Lindsay R."/>
            <person name="Hauser H."/>
            <person name="James K.D."/>
            <person name="Quiles M."/>
            <person name="Madan Babu M."/>
            <person name="Saito T."/>
            <person name="Buchrieser C."/>
            <person name="Wardroper A."/>
            <person name="Felder M."/>
            <person name="Thangavelu M."/>
            <person name="Johnson D."/>
            <person name="Knights A."/>
            <person name="Loulseged H."/>
            <person name="Mungall K.L."/>
            <person name="Oliver K."/>
            <person name="Price C."/>
            <person name="Quail M.A."/>
            <person name="Urushihara H."/>
            <person name="Hernandez J."/>
            <person name="Rabbinowitsch E."/>
            <person name="Steffen D."/>
            <person name="Sanders M."/>
            <person name="Ma J."/>
            <person name="Kohara Y."/>
            <person name="Sharp S."/>
            <person name="Simmonds M.N."/>
            <person name="Spiegler S."/>
            <person name="Tivey A."/>
            <person name="Sugano S."/>
            <person name="White B."/>
            <person name="Walker D."/>
            <person name="Woodward J.R."/>
            <person name="Winckler T."/>
            <person name="Tanaka Y."/>
            <person name="Shaulsky G."/>
            <person name="Schleicher M."/>
            <person name="Weinstock G.M."/>
            <person name="Rosenthal A."/>
            <person name="Cox E.C."/>
            <person name="Chisholm R.L."/>
            <person name="Gibbs R.A."/>
            <person name="Loomis W.F."/>
            <person name="Platzer M."/>
            <person name="Kay R.R."/>
            <person name="Williams J.G."/>
            <person name="Dear P.H."/>
            <person name="Noegel A.A."/>
            <person name="Barrell B.G."/>
            <person name="Kuspa A."/>
        </authorList>
    </citation>
    <scope>NUCLEOTIDE SEQUENCE [LARGE SCALE GENOMIC DNA]</scope>
    <source>
        <strain>AX4</strain>
    </source>
</reference>
<keyword id="KW-1185">Reference proteome</keyword>
<sequence>MSNKEEEKEKERFSEEYIENAKTQINKLFFDRIGGLIGFSDQDNNQDINHKNTLNLNYQEREEEDDDEEETTQTVNVYSTIGINNNNNINKTFKINDNETIIINNNNNDNDNNNKEKEDNDEKEYQRIKSEYIKISKRYFELKEKRIIKKRNKE</sequence>
<proteinExistence type="predicted"/>
<feature type="chain" id="PRO_0000352436" description="Putative uncharacterized protein DDB_G0279989">
    <location>
        <begin position="1"/>
        <end position="154"/>
    </location>
</feature>
<feature type="region of interest" description="Disordered" evidence="1">
    <location>
        <begin position="104"/>
        <end position="124"/>
    </location>
</feature>
<feature type="compositionally biased region" description="Basic and acidic residues" evidence="1">
    <location>
        <begin position="112"/>
        <end position="124"/>
    </location>
</feature>
<protein>
    <recommendedName>
        <fullName>Putative uncharacterized protein DDB_G0279989</fullName>
    </recommendedName>
</protein>
<gene>
    <name type="ORF">DDB_G0279989</name>
</gene>